<accession>Q865U8</accession>
<protein>
    <recommendedName>
        <fullName>Ankyrin repeat domain-containing protein 1</fullName>
    </recommendedName>
    <alternativeName>
        <fullName>Cardiac ankyrin repeat protein</fullName>
    </alternativeName>
</protein>
<comment type="function">
    <text evidence="1">May play an important role in endothelial cell activation. May act as a nuclear transcription factor that negatively regulates the expression of cardiac genes (By similarity).</text>
</comment>
<comment type="subunit">
    <text evidence="1">Interacts with TTN/titin and YBX1.</text>
</comment>
<comment type="subcellular location">
    <subcellularLocation>
        <location evidence="1">Nucleus</location>
    </subcellularLocation>
</comment>
<comment type="tissue specificity">
    <text evidence="3">Expressed in heart. In postnatal neonatal heart, it is expressed in an asymmetrical way; left ventricle favored towards right ventricle. Whether or not this could be correlated with a hypertrophic heart is still a matter of debate. Levels increase gradually from newborn to adult.</text>
</comment>
<comment type="induction">
    <text evidence="3">Down-regulated by doxorubicin (adriamycin), in vitro.</text>
</comment>
<name>ANKR1_PIG</name>
<proteinExistence type="evidence at transcript level"/>
<evidence type="ECO:0000250" key="1"/>
<evidence type="ECO:0000255" key="2"/>
<evidence type="ECO:0000269" key="3">
    <source>
    </source>
</evidence>
<sequence length="319" mass="36126">MMVLKVEELVTGKKNGGGDAGEFLPEDFRDGEYEAAVTLEKQEDLKTLPAHFVSLGEQQWKIEKEREAELKKKKLEQRSKLENLEDLEIIIQLKKRKKYRKTKVPVVKEPEPEVITEPVDVPRFLKAALENKLPVVEKFLSDKNNPDVCDEYKRTALHRACLEGHLAIVEKLIEAGAQIEFRDMLESTAIHWASRGGNLDVLKLLLNKGAKISARDKLLSTALHVAVRTGHYECAEHLIACEADLNAKDREGDTPLHDAVRLNRYKMIRLLITYGADLNVKNCAGKTPMDLVLNWQNGTKAIFDSLKENSYKASRIATF</sequence>
<dbReference type="EMBL" id="AY248702">
    <property type="protein sequence ID" value="AAO74642.1"/>
    <property type="molecule type" value="mRNA"/>
</dbReference>
<dbReference type="RefSeq" id="NP_999087.1">
    <property type="nucleotide sequence ID" value="NM_213922.1"/>
</dbReference>
<dbReference type="SMR" id="Q865U8"/>
<dbReference type="FunCoup" id="Q865U8">
    <property type="interactions" value="185"/>
</dbReference>
<dbReference type="STRING" id="9823.ENSSSCP00000045961"/>
<dbReference type="PaxDb" id="9823-ENSSSCP00000011149"/>
<dbReference type="Ensembl" id="ENSSSCT00015101757.1">
    <property type="protein sequence ID" value="ENSSSCP00015042171.1"/>
    <property type="gene ID" value="ENSSSCG00015075218.1"/>
</dbReference>
<dbReference type="Ensembl" id="ENSSSCT00040020179.1">
    <property type="protein sequence ID" value="ENSSSCP00040008439.1"/>
    <property type="gene ID" value="ENSSSCG00040014998.1"/>
</dbReference>
<dbReference type="Ensembl" id="ENSSSCT00055036296.1">
    <property type="protein sequence ID" value="ENSSSCP00055028828.1"/>
    <property type="gene ID" value="ENSSSCG00055018525.1"/>
</dbReference>
<dbReference type="Ensembl" id="ENSSSCT00070041956.1">
    <property type="protein sequence ID" value="ENSSSCP00070035242.1"/>
    <property type="gene ID" value="ENSSSCG00070021066.1"/>
</dbReference>
<dbReference type="Ensembl" id="ENSSSCT00110041314">
    <property type="protein sequence ID" value="ENSSSCP00110028912"/>
    <property type="gene ID" value="ENSSSCG00110021338"/>
</dbReference>
<dbReference type="Ensembl" id="ENSSSCT00115014646">
    <property type="protein sequence ID" value="ENSSSCP00115013832"/>
    <property type="gene ID" value="ENSSSCG00115008407"/>
</dbReference>
<dbReference type="Ensembl" id="ENSSSCT00130063898">
    <property type="protein sequence ID" value="ENSSSCP00130045760"/>
    <property type="gene ID" value="ENSSSCG00130032731"/>
</dbReference>
<dbReference type="GeneID" id="396959"/>
<dbReference type="KEGG" id="ssc:396959"/>
<dbReference type="CTD" id="27063"/>
<dbReference type="eggNOG" id="KOG0504">
    <property type="taxonomic scope" value="Eukaryota"/>
</dbReference>
<dbReference type="HOGENOM" id="CLU_000134_11_1_1"/>
<dbReference type="InParanoid" id="Q865U8"/>
<dbReference type="OMA" id="QYDCGEH"/>
<dbReference type="OrthoDB" id="426293at2759"/>
<dbReference type="TreeFam" id="TF331650"/>
<dbReference type="Proteomes" id="UP000008227">
    <property type="component" value="Unplaced"/>
</dbReference>
<dbReference type="Proteomes" id="UP000314985">
    <property type="component" value="Chromosome 14"/>
</dbReference>
<dbReference type="Proteomes" id="UP000694570">
    <property type="component" value="Unplaced"/>
</dbReference>
<dbReference type="Proteomes" id="UP000694571">
    <property type="component" value="Unplaced"/>
</dbReference>
<dbReference type="Proteomes" id="UP000694720">
    <property type="component" value="Unplaced"/>
</dbReference>
<dbReference type="Proteomes" id="UP000694722">
    <property type="component" value="Unplaced"/>
</dbReference>
<dbReference type="Proteomes" id="UP000694723">
    <property type="component" value="Unplaced"/>
</dbReference>
<dbReference type="Proteomes" id="UP000694724">
    <property type="component" value="Unplaced"/>
</dbReference>
<dbReference type="Proteomes" id="UP000694725">
    <property type="component" value="Unplaced"/>
</dbReference>
<dbReference type="Proteomes" id="UP000694726">
    <property type="component" value="Unplaced"/>
</dbReference>
<dbReference type="Proteomes" id="UP000694727">
    <property type="component" value="Unplaced"/>
</dbReference>
<dbReference type="Proteomes" id="UP000694728">
    <property type="component" value="Unplaced"/>
</dbReference>
<dbReference type="GO" id="GO:0005737">
    <property type="term" value="C:cytoplasm"/>
    <property type="evidence" value="ECO:0000314"/>
    <property type="project" value="BHF-UCL"/>
</dbReference>
<dbReference type="GO" id="GO:0005634">
    <property type="term" value="C:nucleus"/>
    <property type="evidence" value="ECO:0000318"/>
    <property type="project" value="GO_Central"/>
</dbReference>
<dbReference type="GO" id="GO:0048471">
    <property type="term" value="C:perinuclear region of cytoplasm"/>
    <property type="evidence" value="ECO:0000314"/>
    <property type="project" value="BHF-UCL"/>
</dbReference>
<dbReference type="GO" id="GO:0003779">
    <property type="term" value="F:actin binding"/>
    <property type="evidence" value="ECO:0000353"/>
    <property type="project" value="BHF-UCL"/>
</dbReference>
<dbReference type="GO" id="GO:0061629">
    <property type="term" value="F:RNA polymerase II-specific DNA-binding transcription factor binding"/>
    <property type="evidence" value="ECO:0000318"/>
    <property type="project" value="GO_Central"/>
</dbReference>
<dbReference type="GO" id="GO:0031432">
    <property type="term" value="F:titin binding"/>
    <property type="evidence" value="ECO:0000353"/>
    <property type="project" value="BHF-UCL"/>
</dbReference>
<dbReference type="GO" id="GO:0006357">
    <property type="term" value="P:regulation of transcription by RNA polymerase II"/>
    <property type="evidence" value="ECO:0000318"/>
    <property type="project" value="GO_Central"/>
</dbReference>
<dbReference type="FunFam" id="1.25.40.20:FF:000111">
    <property type="entry name" value="Ankyrin repeat domain-containing protein 1"/>
    <property type="match status" value="1"/>
</dbReference>
<dbReference type="FunFam" id="1.25.40.20:FF:000369">
    <property type="entry name" value="Ankyrin repeat domain-containing protein 1"/>
    <property type="match status" value="1"/>
</dbReference>
<dbReference type="Gene3D" id="1.25.40.20">
    <property type="entry name" value="Ankyrin repeat-containing domain"/>
    <property type="match status" value="2"/>
</dbReference>
<dbReference type="InterPro" id="IPR002110">
    <property type="entry name" value="Ankyrin_rpt"/>
</dbReference>
<dbReference type="InterPro" id="IPR036770">
    <property type="entry name" value="Ankyrin_rpt-contain_sf"/>
</dbReference>
<dbReference type="PANTHER" id="PTHR24126:SF7">
    <property type="entry name" value="ANKYRIN REPEAT DOMAIN-CONTAINING PROTEIN 1"/>
    <property type="match status" value="1"/>
</dbReference>
<dbReference type="PANTHER" id="PTHR24126">
    <property type="entry name" value="ANKYRIN REPEAT, PH AND SEC7 DOMAIN CONTAINING PROTEIN SECG-RELATED"/>
    <property type="match status" value="1"/>
</dbReference>
<dbReference type="Pfam" id="PF12796">
    <property type="entry name" value="Ank_2"/>
    <property type="match status" value="2"/>
</dbReference>
<dbReference type="PRINTS" id="PR01415">
    <property type="entry name" value="ANKYRIN"/>
</dbReference>
<dbReference type="SMART" id="SM00248">
    <property type="entry name" value="ANK"/>
    <property type="match status" value="5"/>
</dbReference>
<dbReference type="SUPFAM" id="SSF48403">
    <property type="entry name" value="Ankyrin repeat"/>
    <property type="match status" value="1"/>
</dbReference>
<dbReference type="PROSITE" id="PS50297">
    <property type="entry name" value="ANK_REP_REGION"/>
    <property type="match status" value="1"/>
</dbReference>
<dbReference type="PROSITE" id="PS50088">
    <property type="entry name" value="ANK_REPEAT"/>
    <property type="match status" value="4"/>
</dbReference>
<keyword id="KW-0040">ANK repeat</keyword>
<keyword id="KW-0175">Coiled coil</keyword>
<keyword id="KW-0539">Nucleus</keyword>
<keyword id="KW-1185">Reference proteome</keyword>
<keyword id="KW-0677">Repeat</keyword>
<organism>
    <name type="scientific">Sus scrofa</name>
    <name type="common">Pig</name>
    <dbReference type="NCBI Taxonomy" id="9823"/>
    <lineage>
        <taxon>Eukaryota</taxon>
        <taxon>Metazoa</taxon>
        <taxon>Chordata</taxon>
        <taxon>Craniata</taxon>
        <taxon>Vertebrata</taxon>
        <taxon>Euteleostomi</taxon>
        <taxon>Mammalia</taxon>
        <taxon>Eutheria</taxon>
        <taxon>Laurasiatheria</taxon>
        <taxon>Artiodactyla</taxon>
        <taxon>Suina</taxon>
        <taxon>Suidae</taxon>
        <taxon>Sus</taxon>
    </lineage>
</organism>
<reference key="1">
    <citation type="journal article" date="2004" name="Eur. J. Heart Fail.">
        <title>Left-right asymmetric ventricular expression of CARP in the piglet heart: regional response to experimental heart failure.</title>
        <authorList>
            <person name="Torrado M."/>
            <person name="Lopez E."/>
            <person name="Centeno A."/>
            <person name="Castro-Beiras A."/>
            <person name="Mikhailov A.T."/>
        </authorList>
    </citation>
    <scope>NUCLEOTIDE SEQUENCE [MRNA]</scope>
    <scope>INDUCTION BY DOXORUBICIN</scope>
    <scope>TISSUE SPECIFICITY</scope>
    <source>
        <tissue>Heart</tissue>
    </source>
</reference>
<gene>
    <name type="primary">ANKRD1</name>
    <name type="synonym">CARP</name>
</gene>
<feature type="chain" id="PRO_0000240481" description="Ankyrin repeat domain-containing protein 1">
    <location>
        <begin position="1"/>
        <end position="319"/>
    </location>
</feature>
<feature type="repeat" description="ANK 1">
    <location>
        <begin position="152"/>
        <end position="181"/>
    </location>
</feature>
<feature type="repeat" description="ANK 2">
    <location>
        <begin position="185"/>
        <end position="214"/>
    </location>
</feature>
<feature type="repeat" description="ANK 3">
    <location>
        <begin position="218"/>
        <end position="247"/>
    </location>
</feature>
<feature type="repeat" description="ANK 4">
    <location>
        <begin position="251"/>
        <end position="280"/>
    </location>
</feature>
<feature type="repeat" description="ANK 5">
    <location>
        <begin position="284"/>
        <end position="315"/>
    </location>
</feature>
<feature type="coiled-coil region" evidence="2">
    <location>
        <begin position="63"/>
        <end position="89"/>
    </location>
</feature>